<feature type="chain" id="PRO_0000336323" description="Imidazoleglycerol-phosphate dehydratase">
    <location>
        <begin position="1"/>
        <end position="202"/>
    </location>
</feature>
<sequence>MSRFAKVERKTKESDIVVELDLDGTGQVSIDTGVPFFDHMLTSLGTHASFDLTVKAVGDIEIEGHHTIEDTSIVLGQALAQALGDKKGIRRFGDAFIPMDECLAHAAVDVSGRPYFVHTGEPDYMVQFTIAGSAAPYHTVVNRHVFESLAYNARIALHVRTLYGRDPHHITEAEYKAVARALRQAVEYDPRVTGVPSTKGTL</sequence>
<gene>
    <name evidence="1" type="primary">hisB</name>
    <name type="ordered locus">Mflv_3611</name>
</gene>
<organism>
    <name type="scientific">Mycolicibacterium gilvum (strain PYR-GCK)</name>
    <name type="common">Mycobacterium gilvum (strain PYR-GCK)</name>
    <dbReference type="NCBI Taxonomy" id="350054"/>
    <lineage>
        <taxon>Bacteria</taxon>
        <taxon>Bacillati</taxon>
        <taxon>Actinomycetota</taxon>
        <taxon>Actinomycetes</taxon>
        <taxon>Mycobacteriales</taxon>
        <taxon>Mycobacteriaceae</taxon>
        <taxon>Mycolicibacterium</taxon>
    </lineage>
</organism>
<keyword id="KW-0028">Amino-acid biosynthesis</keyword>
<keyword id="KW-0963">Cytoplasm</keyword>
<keyword id="KW-0368">Histidine biosynthesis</keyword>
<keyword id="KW-0456">Lyase</keyword>
<comment type="catalytic activity">
    <reaction evidence="1">
        <text>D-erythro-1-(imidazol-4-yl)glycerol 3-phosphate = 3-(imidazol-4-yl)-2-oxopropyl phosphate + H2O</text>
        <dbReference type="Rhea" id="RHEA:11040"/>
        <dbReference type="ChEBI" id="CHEBI:15377"/>
        <dbReference type="ChEBI" id="CHEBI:57766"/>
        <dbReference type="ChEBI" id="CHEBI:58278"/>
        <dbReference type="EC" id="4.2.1.19"/>
    </reaction>
</comment>
<comment type="pathway">
    <text evidence="1">Amino-acid biosynthesis; L-histidine biosynthesis; L-histidine from 5-phospho-alpha-D-ribose 1-diphosphate: step 6/9.</text>
</comment>
<comment type="subcellular location">
    <subcellularLocation>
        <location evidence="1">Cytoplasm</location>
    </subcellularLocation>
</comment>
<comment type="similarity">
    <text evidence="1">Belongs to the imidazoleglycerol-phosphate dehydratase family.</text>
</comment>
<reference key="1">
    <citation type="submission" date="2007-04" db="EMBL/GenBank/DDBJ databases">
        <title>Complete sequence of chromosome of Mycobacterium gilvum PYR-GCK.</title>
        <authorList>
            <consortium name="US DOE Joint Genome Institute"/>
            <person name="Copeland A."/>
            <person name="Lucas S."/>
            <person name="Lapidus A."/>
            <person name="Barry K."/>
            <person name="Detter J.C."/>
            <person name="Glavina del Rio T."/>
            <person name="Hammon N."/>
            <person name="Israni S."/>
            <person name="Dalin E."/>
            <person name="Tice H."/>
            <person name="Pitluck S."/>
            <person name="Chain P."/>
            <person name="Malfatti S."/>
            <person name="Shin M."/>
            <person name="Vergez L."/>
            <person name="Schmutz J."/>
            <person name="Larimer F."/>
            <person name="Land M."/>
            <person name="Hauser L."/>
            <person name="Kyrpides N."/>
            <person name="Mikhailova N."/>
            <person name="Miller C."/>
            <person name="Richardson P."/>
        </authorList>
    </citation>
    <scope>NUCLEOTIDE SEQUENCE [LARGE SCALE GENOMIC DNA]</scope>
    <source>
        <strain>PYR-GCK</strain>
    </source>
</reference>
<evidence type="ECO:0000255" key="1">
    <source>
        <dbReference type="HAMAP-Rule" id="MF_00076"/>
    </source>
</evidence>
<protein>
    <recommendedName>
        <fullName evidence="1">Imidazoleglycerol-phosphate dehydratase</fullName>
        <shortName evidence="1">IGPD</shortName>
        <ecNumber evidence="1">4.2.1.19</ecNumber>
    </recommendedName>
</protein>
<dbReference type="EC" id="4.2.1.19" evidence="1"/>
<dbReference type="EMBL" id="CP000656">
    <property type="protein sequence ID" value="ABP46085.1"/>
    <property type="molecule type" value="Genomic_DNA"/>
</dbReference>
<dbReference type="SMR" id="A4T9M6"/>
<dbReference type="STRING" id="350054.Mflv_3611"/>
<dbReference type="KEGG" id="mgi:Mflv_3611"/>
<dbReference type="eggNOG" id="COG0131">
    <property type="taxonomic scope" value="Bacteria"/>
</dbReference>
<dbReference type="HOGENOM" id="CLU_044308_3_0_11"/>
<dbReference type="OrthoDB" id="9790411at2"/>
<dbReference type="UniPathway" id="UPA00031">
    <property type="reaction ID" value="UER00011"/>
</dbReference>
<dbReference type="GO" id="GO:0005737">
    <property type="term" value="C:cytoplasm"/>
    <property type="evidence" value="ECO:0007669"/>
    <property type="project" value="UniProtKB-SubCell"/>
</dbReference>
<dbReference type="GO" id="GO:0004424">
    <property type="term" value="F:imidazoleglycerol-phosphate dehydratase activity"/>
    <property type="evidence" value="ECO:0007669"/>
    <property type="project" value="UniProtKB-UniRule"/>
</dbReference>
<dbReference type="GO" id="GO:0000105">
    <property type="term" value="P:L-histidine biosynthetic process"/>
    <property type="evidence" value="ECO:0007669"/>
    <property type="project" value="UniProtKB-UniRule"/>
</dbReference>
<dbReference type="CDD" id="cd07914">
    <property type="entry name" value="IGPD"/>
    <property type="match status" value="1"/>
</dbReference>
<dbReference type="FunFam" id="3.30.230.40:FF:000001">
    <property type="entry name" value="Imidazoleglycerol-phosphate dehydratase HisB"/>
    <property type="match status" value="1"/>
</dbReference>
<dbReference type="FunFam" id="3.30.230.40:FF:000003">
    <property type="entry name" value="Imidazoleglycerol-phosphate dehydratase HisB"/>
    <property type="match status" value="1"/>
</dbReference>
<dbReference type="Gene3D" id="3.30.230.40">
    <property type="entry name" value="Imidazole glycerol phosphate dehydratase, domain 1"/>
    <property type="match status" value="2"/>
</dbReference>
<dbReference type="HAMAP" id="MF_00076">
    <property type="entry name" value="HisB"/>
    <property type="match status" value="1"/>
</dbReference>
<dbReference type="InterPro" id="IPR038494">
    <property type="entry name" value="IGPD_sf"/>
</dbReference>
<dbReference type="InterPro" id="IPR000807">
    <property type="entry name" value="ImidazoleglycerolP_deHydtase"/>
</dbReference>
<dbReference type="InterPro" id="IPR020565">
    <property type="entry name" value="ImidazoleglycerP_deHydtase_CS"/>
</dbReference>
<dbReference type="InterPro" id="IPR020568">
    <property type="entry name" value="Ribosomal_Su5_D2-typ_SF"/>
</dbReference>
<dbReference type="NCBIfam" id="NF002110">
    <property type="entry name" value="PRK00951.1-6"/>
    <property type="match status" value="1"/>
</dbReference>
<dbReference type="NCBIfam" id="NF002111">
    <property type="entry name" value="PRK00951.2-1"/>
    <property type="match status" value="1"/>
</dbReference>
<dbReference type="NCBIfam" id="NF002114">
    <property type="entry name" value="PRK00951.2-4"/>
    <property type="match status" value="1"/>
</dbReference>
<dbReference type="PANTHER" id="PTHR23133:SF2">
    <property type="entry name" value="IMIDAZOLEGLYCEROL-PHOSPHATE DEHYDRATASE"/>
    <property type="match status" value="1"/>
</dbReference>
<dbReference type="PANTHER" id="PTHR23133">
    <property type="entry name" value="IMIDAZOLEGLYCEROL-PHOSPHATE DEHYDRATASE HIS7"/>
    <property type="match status" value="1"/>
</dbReference>
<dbReference type="Pfam" id="PF00475">
    <property type="entry name" value="IGPD"/>
    <property type="match status" value="1"/>
</dbReference>
<dbReference type="SUPFAM" id="SSF54211">
    <property type="entry name" value="Ribosomal protein S5 domain 2-like"/>
    <property type="match status" value="2"/>
</dbReference>
<dbReference type="PROSITE" id="PS00955">
    <property type="entry name" value="IGP_DEHYDRATASE_2"/>
    <property type="match status" value="1"/>
</dbReference>
<proteinExistence type="inferred from homology"/>
<accession>A4T9M6</accession>
<name>HIS7_MYCGI</name>